<keyword id="KW-0002">3D-structure</keyword>
<keyword id="KW-0007">Acetylation</keyword>
<keyword id="KW-0131">Cell cycle</keyword>
<keyword id="KW-0539">Nucleus</keyword>
<keyword id="KW-1185">Reference proteome</keyword>
<keyword id="KW-0804">Transcription</keyword>
<keyword id="KW-0805">Transcription regulation</keyword>
<dbReference type="EMBL" id="AF162267">
    <property type="protein sequence ID" value="AAD47275.1"/>
    <property type="molecule type" value="Genomic_DNA"/>
</dbReference>
<dbReference type="EMBL" id="X59720">
    <property type="protein sequence ID" value="CAC42974.1"/>
    <property type="molecule type" value="Genomic_DNA"/>
</dbReference>
<dbReference type="EMBL" id="AY558371">
    <property type="protein sequence ID" value="AAS56697.1"/>
    <property type="molecule type" value="Genomic_DNA"/>
</dbReference>
<dbReference type="EMBL" id="BK006937">
    <property type="protein sequence ID" value="DAA07499.1"/>
    <property type="molecule type" value="Genomic_DNA"/>
</dbReference>
<dbReference type="PIR" id="S07696">
    <property type="entry name" value="S07696"/>
</dbReference>
<dbReference type="RefSeq" id="NP_009949.1">
    <property type="nucleotide sequence ID" value="NM_001184313.1"/>
</dbReference>
<dbReference type="PDB" id="6K15">
    <property type="method" value="EM"/>
    <property type="resolution" value="3.40 A"/>
    <property type="chains" value="E=1-78"/>
</dbReference>
<dbReference type="PDB" id="6KW3">
    <property type="method" value="EM"/>
    <property type="resolution" value="7.13 A"/>
    <property type="chains" value="E=1-78"/>
</dbReference>
<dbReference type="PDB" id="6KW4">
    <property type="method" value="EM"/>
    <property type="resolution" value="7.55 A"/>
    <property type="chains" value="E=1-78"/>
</dbReference>
<dbReference type="PDB" id="6KW5">
    <property type="method" value="EM"/>
    <property type="resolution" value="10.13 A"/>
    <property type="chains" value="E=1-78"/>
</dbReference>
<dbReference type="PDB" id="6TDA">
    <property type="method" value="EM"/>
    <property type="resolution" value="15.00 A"/>
    <property type="chains" value="Q=1-78"/>
</dbReference>
<dbReference type="PDB" id="6V8O">
    <property type="method" value="EM"/>
    <property type="resolution" value="3.07 A"/>
    <property type="chains" value="C=1-78"/>
</dbReference>
<dbReference type="PDB" id="6V92">
    <property type="method" value="EM"/>
    <property type="resolution" value="20.00 A"/>
    <property type="chains" value="C=1-78"/>
</dbReference>
<dbReference type="PDBsum" id="6K15"/>
<dbReference type="PDBsum" id="6KW3"/>
<dbReference type="PDBsum" id="6KW4"/>
<dbReference type="PDBsum" id="6KW5"/>
<dbReference type="PDBsum" id="6TDA"/>
<dbReference type="PDBsum" id="6V8O"/>
<dbReference type="PDBsum" id="6V92"/>
<dbReference type="EMDB" id="EMD-0777"/>
<dbReference type="EMDB" id="EMD-0778"/>
<dbReference type="EMDB" id="EMD-0779"/>
<dbReference type="EMDB" id="EMD-10465"/>
<dbReference type="EMDB" id="EMD-21107"/>
<dbReference type="EMDB" id="EMD-21114"/>
<dbReference type="EMDB" id="EMD-9905"/>
<dbReference type="SMR" id="Q9URQ5"/>
<dbReference type="BioGRID" id="31003">
    <property type="interactions" value="136"/>
</dbReference>
<dbReference type="ComplexPortal" id="CPX-1888">
    <property type="entry name" value="RSC chromatin remodelling complex, variant RSC2"/>
</dbReference>
<dbReference type="ComplexPortal" id="CPX-1889">
    <property type="entry name" value="RSC chromatin remodelling complex, variant RSC1"/>
</dbReference>
<dbReference type="FunCoup" id="Q9URQ5">
    <property type="interactions" value="136"/>
</dbReference>
<dbReference type="IntAct" id="Q9URQ5">
    <property type="interactions" value="35"/>
</dbReference>
<dbReference type="MINT" id="Q9URQ5"/>
<dbReference type="STRING" id="4932.YCR020W-B"/>
<dbReference type="iPTMnet" id="Q9URQ5"/>
<dbReference type="PaxDb" id="4932-YCR020W-B"/>
<dbReference type="PeptideAtlas" id="Q9URQ5"/>
<dbReference type="EnsemblFungi" id="YCR020W-B_mRNA">
    <property type="protein sequence ID" value="YCR020W-B"/>
    <property type="gene ID" value="YCR020W-B"/>
</dbReference>
<dbReference type="GeneID" id="850384"/>
<dbReference type="KEGG" id="sce:YCR020W-B"/>
<dbReference type="AGR" id="SGD:S000006439"/>
<dbReference type="SGD" id="S000006439">
    <property type="gene designation" value="HTL1"/>
</dbReference>
<dbReference type="VEuPathDB" id="FungiDB:YCR020W-B"/>
<dbReference type="HOGENOM" id="CLU_195456_1_0_1"/>
<dbReference type="InParanoid" id="Q9URQ5"/>
<dbReference type="OMA" id="HRERMCE"/>
<dbReference type="OrthoDB" id="4066304at2759"/>
<dbReference type="BioCyc" id="YEAST:G3O-29401-MONOMER"/>
<dbReference type="BioGRID-ORCS" id="850384">
    <property type="hits" value="0 hits in 10 CRISPR screens"/>
</dbReference>
<dbReference type="PRO" id="PR:Q9URQ5"/>
<dbReference type="Proteomes" id="UP000002311">
    <property type="component" value="Chromosome III"/>
</dbReference>
<dbReference type="RNAct" id="Q9URQ5">
    <property type="molecule type" value="protein"/>
</dbReference>
<dbReference type="GO" id="GO:0000785">
    <property type="term" value="C:chromatin"/>
    <property type="evidence" value="ECO:0000303"/>
    <property type="project" value="ComplexPortal"/>
</dbReference>
<dbReference type="GO" id="GO:0005634">
    <property type="term" value="C:nucleus"/>
    <property type="evidence" value="ECO:0000314"/>
    <property type="project" value="UniProtKB"/>
</dbReference>
<dbReference type="GO" id="GO:0016586">
    <property type="term" value="C:RSC-type complex"/>
    <property type="evidence" value="ECO:0000314"/>
    <property type="project" value="SGD"/>
</dbReference>
<dbReference type="GO" id="GO:0006338">
    <property type="term" value="P:chromatin remodeling"/>
    <property type="evidence" value="ECO:0000269"/>
    <property type="project" value="ComplexPortal"/>
</dbReference>
<dbReference type="GO" id="GO:0000086">
    <property type="term" value="P:G2/M transition of mitotic cell cycle"/>
    <property type="evidence" value="ECO:0000316"/>
    <property type="project" value="UniProtKB"/>
</dbReference>
<dbReference type="GO" id="GO:0006337">
    <property type="term" value="P:nucleosome disassembly"/>
    <property type="evidence" value="ECO:0000314"/>
    <property type="project" value="SGD"/>
</dbReference>
<dbReference type="GO" id="GO:0006368">
    <property type="term" value="P:transcription elongation by RNA polymerase II"/>
    <property type="evidence" value="ECO:0000314"/>
    <property type="project" value="SGD"/>
</dbReference>
<sequence>MSQNNTISSMNPERAYNNVTLKNLTAFQLLSQRENICELLNLVESTERHNSIINPERQRMSLEEMKKMLDALKNERKK</sequence>
<proteinExistence type="evidence at protein level"/>
<gene>
    <name type="primary">HTL1</name>
    <name type="synonym">DRT1</name>
    <name type="ordered locus">YCR020W-B</name>
</gene>
<evidence type="ECO:0000269" key="1">
    <source>
    </source>
</evidence>
<evidence type="ECO:0000269" key="2">
    <source>
    </source>
</evidence>
<evidence type="ECO:0000269" key="3">
    <source>
    </source>
</evidence>
<evidence type="ECO:0000269" key="4">
    <source>
    </source>
</evidence>
<evidence type="ECO:0000269" key="5">
    <source>
    </source>
</evidence>
<evidence type="ECO:0007744" key="6">
    <source>
    </source>
</evidence>
<evidence type="ECO:0007829" key="7">
    <source>
        <dbReference type="PDB" id="6V8O"/>
    </source>
</evidence>
<organism>
    <name type="scientific">Saccharomyces cerevisiae (strain ATCC 204508 / S288c)</name>
    <name type="common">Baker's yeast</name>
    <dbReference type="NCBI Taxonomy" id="559292"/>
    <lineage>
        <taxon>Eukaryota</taxon>
        <taxon>Fungi</taxon>
        <taxon>Dikarya</taxon>
        <taxon>Ascomycota</taxon>
        <taxon>Saccharomycotina</taxon>
        <taxon>Saccharomycetes</taxon>
        <taxon>Saccharomycetales</taxon>
        <taxon>Saccharomycetaceae</taxon>
        <taxon>Saccharomyces</taxon>
    </lineage>
</organism>
<accession>Q9URQ5</accession>
<accession>D6VR30</accession>
<name>HTL1_YEAST</name>
<feature type="initiator methionine" description="Removed" evidence="6">
    <location>
        <position position="1"/>
    </location>
</feature>
<feature type="chain" id="PRO_0000084085" description="High temperature lethal protein 1">
    <location>
        <begin position="2"/>
        <end position="78"/>
    </location>
</feature>
<feature type="modified residue" description="N-acetylserine" evidence="6">
    <location>
        <position position="2"/>
    </location>
</feature>
<feature type="helix" evidence="7">
    <location>
        <begin position="21"/>
        <end position="39"/>
    </location>
</feature>
<feature type="helix" evidence="7">
    <location>
        <begin position="46"/>
        <end position="53"/>
    </location>
</feature>
<feature type="helix" evidence="7">
    <location>
        <begin position="55"/>
        <end position="74"/>
    </location>
</feature>
<comment type="function">
    <text evidence="1 2 5">Required for cell cycle progression through G2/M transition at temperatures higher than 33 degrees Celsius. Component of the chromatin structure-remodeling complex (RSC), which is involved in transcription regulation and nucleosome positioning. RSC is responsible for the transfer of a histone octamer from a nucleosome core particle to naked DNA. The reaction requires ATP and involves an activated RSC-nucleosome intermediate. Remodeling reaction also involves DNA translocation, DNA twist and conformational change. As a reconfigurer of centromeric and flanking nucleosomes, RSC complex is required both for proper kinetochore function in chromosome segregation and, via a PKC1-dependent signaling pathway, for organization of the cellular cytoskeleton. When associated with the RSC complex, may act coordinately with PKC1 to regulate G2/M transition. Together with LDB7, NPL6, RSC3, RSC30 components, defines a fungal-specific module within the RSC complex that plays a role in many cellular functions including the maintenance of cell wall integrity.</text>
</comment>
<comment type="subunit">
    <text evidence="1 2 4 5">Interacts directly with RSC8. Component of the two forms of the RSC complex composed of at least either RSC1 or RSC2, and ARP7, ARP9, LDB7, NPL6, RSC3, RSC30, RSC4, RSC58, RSC6, RSC8, RSC9, SFH1, STH1, HTL1 and probably RTT102. The complexes interact with histone and histone variant components of centromeric chromatin. Component of a fungal-specific module (HTL1-LDB7-NPL6-RSC3-RSC30) within the RSC complex.</text>
</comment>
<comment type="interaction">
    <interactant intactId="EBI-8717">
        <id>Q9URQ5</id>
    </interactant>
    <interactant intactId="EBI-23005">
        <id>P43609</id>
        <label>RSC8</label>
    </interactant>
    <organismsDiffer>false</organismsDiffer>
    <experiments>4</experiments>
</comment>
<comment type="interaction">
    <interactant intactId="EBI-8717">
        <id>Q9URQ5</id>
    </interactant>
    <interactant intactId="EBI-18410">
        <id>P32597</id>
        <label>STH1</label>
    </interactant>
    <organismsDiffer>false</organismsDiffer>
    <experiments>4</experiments>
</comment>
<comment type="subcellular location">
    <subcellularLocation>
        <location evidence="1">Nucleus</location>
    </subcellularLocation>
</comment>
<comment type="miscellaneous">
    <text evidence="3">Present with 3550 molecules/cell in log phase SD medium.</text>
</comment>
<protein>
    <recommendedName>
        <fullName>High temperature lethal protein 1</fullName>
    </recommendedName>
    <alternativeName>
        <fullName>Chromatin structure-remodeling complex protein HTL1</fullName>
    </alternativeName>
</protein>
<reference key="1">
    <citation type="submission" date="1999-06" db="EMBL/GenBank/DDBJ databases">
        <title>The DRT1 gene encodes a novel small ORF necessary for viability at 36 degrees Celsius.</title>
        <authorList>
            <person name="Davidov E."/>
            <person name="Jiang W."/>
            <person name="Bailey D.A."/>
        </authorList>
    </citation>
    <scope>NUCLEOTIDE SEQUENCE [GENOMIC DNA]</scope>
</reference>
<reference key="2">
    <citation type="journal article" date="2003" name="Mol. Genet. Genomics">
        <title>Dissecting the pet18 mutation in Saccharomyces cerevisiae: HTL1 encodes a 7-kDa polypeptide that interacts with components of the RSC complex.</title>
        <authorList>
            <person name="Lu Y.-M."/>
            <person name="Lin Y.-R."/>
            <person name="Tsai A."/>
            <person name="Hsao Y.-S."/>
            <person name="Li C.-C."/>
            <person name="Cheng M.Y."/>
        </authorList>
    </citation>
    <scope>NUCLEOTIDE SEQUENCE [GENOMIC DNA]</scope>
    <scope>FUNCTION</scope>
    <scope>INTERACTION WITH RSC8</scope>
</reference>
<reference key="3">
    <citation type="journal article" date="1992" name="Nature">
        <title>The complete DNA sequence of yeast chromosome III.</title>
        <authorList>
            <person name="Oliver S.G."/>
            <person name="van der Aart Q.J.M."/>
            <person name="Agostoni-Carbone M.L."/>
            <person name="Aigle M."/>
            <person name="Alberghina L."/>
            <person name="Alexandraki D."/>
            <person name="Antoine G."/>
            <person name="Anwar R."/>
            <person name="Ballesta J.P.G."/>
            <person name="Benit P."/>
            <person name="Berben G."/>
            <person name="Bergantino E."/>
            <person name="Biteau N."/>
            <person name="Bolle P.-A."/>
            <person name="Bolotin-Fukuhara M."/>
            <person name="Brown A."/>
            <person name="Brown A.J.P."/>
            <person name="Buhler J.-M."/>
            <person name="Carcano C."/>
            <person name="Carignani G."/>
            <person name="Cederberg H."/>
            <person name="Chanet R."/>
            <person name="Contreras R."/>
            <person name="Crouzet M."/>
            <person name="Daignan-Fornier B."/>
            <person name="Defoor E."/>
            <person name="Delgado M.D."/>
            <person name="Demolder J."/>
            <person name="Doira C."/>
            <person name="Dubois E."/>
            <person name="Dujon B."/>
            <person name="Duesterhoeft A."/>
            <person name="Erdmann D."/>
            <person name="Esteban M."/>
            <person name="Fabre F."/>
            <person name="Fairhead C."/>
            <person name="Faye G."/>
            <person name="Feldmann H."/>
            <person name="Fiers W."/>
            <person name="Francingues-Gaillard M.-C."/>
            <person name="Franco L."/>
            <person name="Frontali L."/>
            <person name="Fukuhara H."/>
            <person name="Fuller L.J."/>
            <person name="Galland P."/>
            <person name="Gent M.E."/>
            <person name="Gigot D."/>
            <person name="Gilliquet V."/>
            <person name="Glansdorff N."/>
            <person name="Goffeau A."/>
            <person name="Grenson M."/>
            <person name="Grisanti P."/>
            <person name="Grivell L.A."/>
            <person name="de Haan M."/>
            <person name="Haasemann M."/>
            <person name="Hatat D."/>
            <person name="Hoenicka J."/>
            <person name="Hegemann J.H."/>
            <person name="Herbert C.J."/>
            <person name="Hilger F."/>
            <person name="Hohmann S."/>
            <person name="Hollenberg C.P."/>
            <person name="Huse K."/>
            <person name="Iborra F."/>
            <person name="Indge K.J."/>
            <person name="Isono K."/>
            <person name="Jacq C."/>
            <person name="Jacquet M."/>
            <person name="James C.M."/>
            <person name="Jauniaux J.-C."/>
            <person name="Jia Y."/>
            <person name="Jimenez A."/>
            <person name="Kelly A."/>
            <person name="Kleinhans U."/>
            <person name="Kreisl P."/>
            <person name="Lanfranchi G."/>
            <person name="Lewis C."/>
            <person name="van der Linden C.G."/>
            <person name="Lucchini G."/>
            <person name="Lutzenkirchen K."/>
            <person name="Maat M.J."/>
            <person name="Mallet L."/>
            <person name="Mannhaupt G."/>
            <person name="Martegani E."/>
            <person name="Mathieu A."/>
            <person name="Maurer C.T.C."/>
            <person name="McConnell D."/>
            <person name="McKee R.A."/>
            <person name="Messenguy F."/>
            <person name="Mewes H.-W."/>
            <person name="Molemans F."/>
            <person name="Montague M.A."/>
            <person name="Muzi Falconi M."/>
            <person name="Navas L."/>
            <person name="Newlon C.S."/>
            <person name="Noone D."/>
            <person name="Pallier C."/>
            <person name="Panzeri L."/>
            <person name="Pearson B.M."/>
            <person name="Perea J."/>
            <person name="Philippsen P."/>
            <person name="Pierard A."/>
            <person name="Planta R.J."/>
            <person name="Plevani P."/>
            <person name="Poetsch B."/>
            <person name="Pohl F.M."/>
            <person name="Purnelle B."/>
            <person name="Ramezani Rad M."/>
            <person name="Rasmussen S.W."/>
            <person name="Raynal A."/>
            <person name="Remacha M.A."/>
            <person name="Richterich P."/>
            <person name="Roberts A.B."/>
            <person name="Rodriguez F."/>
            <person name="Sanz E."/>
            <person name="Schaaff-Gerstenschlaeger I."/>
            <person name="Scherens B."/>
            <person name="Schweitzer B."/>
            <person name="Shu Y."/>
            <person name="Skala J."/>
            <person name="Slonimski P.P."/>
            <person name="Sor F."/>
            <person name="Soustelle C."/>
            <person name="Spiegelberg R."/>
            <person name="Stateva L.I."/>
            <person name="Steensma H.Y."/>
            <person name="Steiner S."/>
            <person name="Thierry A."/>
            <person name="Thireos G."/>
            <person name="Tzermia M."/>
            <person name="Urrestarazu L.A."/>
            <person name="Valle G."/>
            <person name="Vetter I."/>
            <person name="van Vliet-Reedijk J.C."/>
            <person name="Voet M."/>
            <person name="Volckaert G."/>
            <person name="Vreken P."/>
            <person name="Wang H."/>
            <person name="Warmington J.R."/>
            <person name="von Wettstein D."/>
            <person name="Wicksteed B.L."/>
            <person name="Wilson C."/>
            <person name="Wurst H."/>
            <person name="Xu G."/>
            <person name="Yoshikawa A."/>
            <person name="Zimmermann F.K."/>
            <person name="Sgouros J.G."/>
        </authorList>
    </citation>
    <scope>NUCLEOTIDE SEQUENCE [LARGE SCALE GENOMIC DNA]</scope>
    <source>
        <strain>ATCC 204508 / S288c</strain>
    </source>
</reference>
<reference key="4">
    <citation type="journal article" date="2014" name="G3 (Bethesda)">
        <title>The reference genome sequence of Saccharomyces cerevisiae: Then and now.</title>
        <authorList>
            <person name="Engel S.R."/>
            <person name="Dietrich F.S."/>
            <person name="Fisk D.G."/>
            <person name="Binkley G."/>
            <person name="Balakrishnan R."/>
            <person name="Costanzo M.C."/>
            <person name="Dwight S.S."/>
            <person name="Hitz B.C."/>
            <person name="Karra K."/>
            <person name="Nash R.S."/>
            <person name="Weng S."/>
            <person name="Wong E.D."/>
            <person name="Lloyd P."/>
            <person name="Skrzypek M.S."/>
            <person name="Miyasato S.R."/>
            <person name="Simison M."/>
            <person name="Cherry J.M."/>
        </authorList>
    </citation>
    <scope>GENOME REANNOTATION</scope>
    <source>
        <strain>ATCC 204508 / S288c</strain>
    </source>
</reference>
<reference key="5">
    <citation type="journal article" date="2007" name="Genome Res.">
        <title>Approaching a complete repository of sequence-verified protein-encoding clones for Saccharomyces cerevisiae.</title>
        <authorList>
            <person name="Hu Y."/>
            <person name="Rolfs A."/>
            <person name="Bhullar B."/>
            <person name="Murthy T.V.S."/>
            <person name="Zhu C."/>
            <person name="Berger M.F."/>
            <person name="Camargo A.A."/>
            <person name="Kelley F."/>
            <person name="McCarron S."/>
            <person name="Jepson D."/>
            <person name="Richardson A."/>
            <person name="Raphael J."/>
            <person name="Moreira D."/>
            <person name="Taycher E."/>
            <person name="Zuo D."/>
            <person name="Mohr S."/>
            <person name="Kane M.F."/>
            <person name="Williamson J."/>
            <person name="Simpson A.J.G."/>
            <person name="Bulyk M.L."/>
            <person name="Harlow E."/>
            <person name="Marsischky G."/>
            <person name="Kolodner R.D."/>
            <person name="LaBaer J."/>
        </authorList>
    </citation>
    <scope>NUCLEOTIDE SEQUENCE [GENOMIC DNA]</scope>
    <source>
        <strain>ATCC 204508 / S288c</strain>
    </source>
</reference>
<reference key="6">
    <citation type="journal article" date="2002" name="Mol. Cell. Biol.">
        <title>HTL1 encodes a novel factor that interacts with the RSC chromatin remodeling complex in Saccharomyces cerevisiae.</title>
        <authorList>
            <person name="Romeo M.J."/>
            <person name="Angus-Hill M.L."/>
            <person name="Sobering A.K."/>
            <person name="Kamada Y."/>
            <person name="Cairns B.R."/>
            <person name="Levin D.E."/>
        </authorList>
    </citation>
    <scope>FUNCTION</scope>
    <scope>SUBCELLULAR LOCATION</scope>
    <scope>IDENTIFICATION IN THE RSC COMPLEX</scope>
</reference>
<reference key="7">
    <citation type="journal article" date="2001" name="Yeast">
        <title>The HTL1 gene (YCR020W-b) of Saccharomyces cerevisiae is necessary for growth at 37 degrees C, and for the conservation of chromosome stability and fertility.</title>
        <authorList>
            <person name="Lanzuolo C."/>
            <person name="Ederle S."/>
            <person name="Pollice A."/>
            <person name="Russo F."/>
            <person name="Storlazzi A."/>
            <person name="Pulitzer J.F."/>
        </authorList>
    </citation>
    <scope>CHARACTERIZATION</scope>
</reference>
<reference key="8">
    <citation type="journal article" date="2003" name="Nature">
        <title>Global analysis of protein expression in yeast.</title>
        <authorList>
            <person name="Ghaemmaghami S."/>
            <person name="Huh W.-K."/>
            <person name="Bower K."/>
            <person name="Howson R.W."/>
            <person name="Belle A."/>
            <person name="Dephoure N."/>
            <person name="O'Shea E.K."/>
            <person name="Weissman J.S."/>
        </authorList>
    </citation>
    <scope>LEVEL OF PROTEIN EXPRESSION [LARGE SCALE ANALYSIS]</scope>
</reference>
<reference key="9">
    <citation type="journal article" date="2004" name="Mol. Cell. Biol.">
        <title>The ctf13-30/CTF13 genomic haploinsufficiency modifier screen identifies the yeast chromatin remodeling complex RSC, which is required for the establishment of sister chromatid cohesion.</title>
        <authorList>
            <person name="Baetz K.K."/>
            <person name="Krogan N.J."/>
            <person name="Emili A."/>
            <person name="Greenblatt J."/>
            <person name="Hieter P."/>
        </authorList>
    </citation>
    <scope>IDENTIFICATION IN THE RSC COMPLEX</scope>
</reference>
<reference key="10">
    <citation type="journal article" date="2006" name="Genetics">
        <title>The RSC chromatin remodeling complex bears an essential fungal-specific protein module with broad functional roles.</title>
        <authorList>
            <person name="Wilson B."/>
            <person name="Erdjument-Bromage H."/>
            <person name="Tempst P."/>
            <person name="Cairns B.R."/>
        </authorList>
    </citation>
    <scope>FUNCTION</scope>
    <scope>IDENTIFICATION IN THE RSC COMPLEX</scope>
</reference>
<reference key="11">
    <citation type="journal article" date="2012" name="Proc. Natl. Acad. Sci. U.S.A.">
        <title>N-terminal acetylome analyses and functional insights of the N-terminal acetyltransferase NatB.</title>
        <authorList>
            <person name="Van Damme P."/>
            <person name="Lasa M."/>
            <person name="Polevoda B."/>
            <person name="Gazquez C."/>
            <person name="Elosegui-Artola A."/>
            <person name="Kim D.S."/>
            <person name="De Juan-Pardo E."/>
            <person name="Demeyer K."/>
            <person name="Hole K."/>
            <person name="Larrea E."/>
            <person name="Timmerman E."/>
            <person name="Prieto J."/>
            <person name="Arnesen T."/>
            <person name="Sherman F."/>
            <person name="Gevaert K."/>
            <person name="Aldabe R."/>
        </authorList>
    </citation>
    <scope>ACETYLATION [LARGE SCALE ANALYSIS] AT SER-2</scope>
    <scope>CLEAVAGE OF INITIATOR METHIONINE [LARGE SCALE ANALYSIS]</scope>
    <scope>IDENTIFICATION BY MASS SPECTROMETRY [LARGE SCALE ANALYSIS]</scope>
</reference>